<dbReference type="EC" id="6.3.2.6"/>
<dbReference type="EMBL" id="L12463">
    <property type="protein sequence ID" value="AAA34317.1"/>
    <property type="molecule type" value="Genomic_DNA"/>
</dbReference>
<dbReference type="SMR" id="P43060"/>
<dbReference type="VEuPathDB" id="FungiDB:CAWG_01410"/>
<dbReference type="VEuPathDB" id="FungiDB:CR_00510C_A"/>
<dbReference type="UniPathway" id="UPA00074">
    <property type="reaction ID" value="UER00131"/>
</dbReference>
<dbReference type="GO" id="GO:0005737">
    <property type="term" value="C:cytoplasm"/>
    <property type="evidence" value="ECO:0007669"/>
    <property type="project" value="TreeGrafter"/>
</dbReference>
<dbReference type="GO" id="GO:0005524">
    <property type="term" value="F:ATP binding"/>
    <property type="evidence" value="ECO:0007669"/>
    <property type="project" value="UniProtKB-KW"/>
</dbReference>
<dbReference type="GO" id="GO:0004639">
    <property type="term" value="F:phosphoribosylaminoimidazolesuccinocarboxamide synthase activity"/>
    <property type="evidence" value="ECO:0007669"/>
    <property type="project" value="UniProtKB-EC"/>
</dbReference>
<dbReference type="GO" id="GO:0006189">
    <property type="term" value="P:'de novo' IMP biosynthetic process"/>
    <property type="evidence" value="ECO:0007669"/>
    <property type="project" value="UniProtKB-UniPathway"/>
</dbReference>
<dbReference type="CDD" id="cd01414">
    <property type="entry name" value="SAICAR_synt_Sc"/>
    <property type="match status" value="1"/>
</dbReference>
<dbReference type="FunFam" id="3.30.200.20:FF:000392">
    <property type="entry name" value="Phosphoribosylaminoimidazole-succinocarboxamide synthase"/>
    <property type="match status" value="1"/>
</dbReference>
<dbReference type="FunFam" id="3.30.470.20:FF:000015">
    <property type="entry name" value="Phosphoribosylaminoimidazole-succinocarboxamide synthase"/>
    <property type="match status" value="1"/>
</dbReference>
<dbReference type="Gene3D" id="3.30.470.20">
    <property type="entry name" value="ATP-grasp fold, B domain"/>
    <property type="match status" value="1"/>
</dbReference>
<dbReference type="Gene3D" id="3.30.200.20">
    <property type="entry name" value="Phosphorylase Kinase, domain 1"/>
    <property type="match status" value="1"/>
</dbReference>
<dbReference type="HAMAP" id="MF_00137">
    <property type="entry name" value="SAICAR_synth"/>
    <property type="match status" value="1"/>
</dbReference>
<dbReference type="InterPro" id="IPR028923">
    <property type="entry name" value="SAICAR_synt/ADE2_N"/>
</dbReference>
<dbReference type="InterPro" id="IPR001636">
    <property type="entry name" value="SAICAR_synth"/>
</dbReference>
<dbReference type="InterPro" id="IPR018236">
    <property type="entry name" value="SAICAR_synthetase_CS"/>
</dbReference>
<dbReference type="NCBIfam" id="NF010568">
    <property type="entry name" value="PRK13961.1"/>
    <property type="match status" value="1"/>
</dbReference>
<dbReference type="NCBIfam" id="TIGR00081">
    <property type="entry name" value="purC"/>
    <property type="match status" value="1"/>
</dbReference>
<dbReference type="PANTHER" id="PTHR43700">
    <property type="entry name" value="PHOSPHORIBOSYLAMINOIMIDAZOLE-SUCCINOCARBOXAMIDE SYNTHASE"/>
    <property type="match status" value="1"/>
</dbReference>
<dbReference type="PANTHER" id="PTHR43700:SF1">
    <property type="entry name" value="PHOSPHORIBOSYLAMINOIMIDAZOLE-SUCCINOCARBOXAMIDE SYNTHASE"/>
    <property type="match status" value="1"/>
</dbReference>
<dbReference type="Pfam" id="PF01259">
    <property type="entry name" value="SAICAR_synt"/>
    <property type="match status" value="1"/>
</dbReference>
<dbReference type="SUPFAM" id="SSF56104">
    <property type="entry name" value="SAICAR synthase-like"/>
    <property type="match status" value="1"/>
</dbReference>
<dbReference type="PROSITE" id="PS01057">
    <property type="entry name" value="SAICAR_SYNTHETASE_1"/>
    <property type="match status" value="1"/>
</dbReference>
<dbReference type="PROSITE" id="PS01058">
    <property type="entry name" value="SAICAR_SYNTHETASE_2"/>
    <property type="match status" value="1"/>
</dbReference>
<feature type="chain" id="PRO_0000100923" description="Phosphoribosylaminoimidazole-succinocarboxamide synthase">
    <location>
        <begin position="1"/>
        <end position="291"/>
    </location>
</feature>
<gene>
    <name type="primary">ADE1</name>
</gene>
<name>PUR7_CANAX</name>
<comment type="catalytic activity">
    <reaction>
        <text>5-amino-1-(5-phospho-D-ribosyl)imidazole-4-carboxylate + L-aspartate + ATP = (2S)-2-[5-amino-1-(5-phospho-beta-D-ribosyl)imidazole-4-carboxamido]succinate + ADP + phosphate + 2 H(+)</text>
        <dbReference type="Rhea" id="RHEA:22628"/>
        <dbReference type="ChEBI" id="CHEBI:15378"/>
        <dbReference type="ChEBI" id="CHEBI:29991"/>
        <dbReference type="ChEBI" id="CHEBI:30616"/>
        <dbReference type="ChEBI" id="CHEBI:43474"/>
        <dbReference type="ChEBI" id="CHEBI:58443"/>
        <dbReference type="ChEBI" id="CHEBI:77657"/>
        <dbReference type="ChEBI" id="CHEBI:456216"/>
        <dbReference type="EC" id="6.3.2.6"/>
    </reaction>
</comment>
<comment type="pathway">
    <text>Purine metabolism; IMP biosynthesis via de novo pathway; 5-amino-1-(5-phospho-D-ribosyl)imidazole-4-carboxamide from 5-amino-1-(5-phospho-D-ribosyl)imidazole-4-carboxylate: step 1/2.</text>
</comment>
<comment type="similarity">
    <text evidence="1">Belongs to the SAICAR synthetase family.</text>
</comment>
<reference key="1">
    <citation type="submission" date="1993-03" db="EMBL/GenBank/DDBJ databases">
        <title>Disruption of the C. albicans ADE1 gene.</title>
        <authorList>
            <person name="Scherer S."/>
            <person name="Grindle S.M."/>
        </authorList>
    </citation>
    <scope>NUCLEOTIDE SEQUENCE [GENOMIC DNA]</scope>
</reference>
<keyword id="KW-0067">ATP-binding</keyword>
<keyword id="KW-0436">Ligase</keyword>
<keyword id="KW-0547">Nucleotide-binding</keyword>
<keyword id="KW-0658">Purine biosynthesis</keyword>
<proteinExistence type="inferred from homology"/>
<evidence type="ECO:0000305" key="1"/>
<organism>
    <name type="scientific">Candida albicans</name>
    <name type="common">Yeast</name>
    <dbReference type="NCBI Taxonomy" id="5476"/>
    <lineage>
        <taxon>Eukaryota</taxon>
        <taxon>Fungi</taxon>
        <taxon>Dikarya</taxon>
        <taxon>Ascomycota</taxon>
        <taxon>Saccharomycotina</taxon>
        <taxon>Pichiomycetes</taxon>
        <taxon>Debaryomycetaceae</taxon>
        <taxon>Candida/Lodderomyces clade</taxon>
        <taxon>Candida</taxon>
    </lineage>
</organism>
<protein>
    <recommendedName>
        <fullName>Phosphoribosylaminoimidazole-succinocarboxamide synthase</fullName>
        <ecNumber>6.3.2.6</ecNumber>
    </recommendedName>
    <alternativeName>
        <fullName>SAICAR synthetase</fullName>
    </alternativeName>
</protein>
<accession>P43060</accession>
<sequence>MTSTNLEGTFPLIARGKVRDIYQVDDNTLLFVATDRISAYDVIMANGIPNKGKILTKLSEFWFAFLPIDNHLIKGDIFEKYPQLEKYRDQLEGRSLLVRKLKLIPLEVIVRGYITGSGWKEYTKSKTVHGIPIGDVVESQQITPIFTPSTKAEQGEHDENITKEQADKIVGKELCDRIEKIAIDLYTKARDYAATKGIIIADTKFEFGLDGDKIVLVDEVLTPDSSRFWSAAKYKLGQSQESYDKQFLRDWLTANGVAGKDGVAMPEDIAVQTKQKYVEAYENLTGEKWQD</sequence>